<sequence length="868" mass="96445">MKRIFYTLGLLLLCLPMLQAGPVTRSKAEQTAKNFFAKRQPTLSSSTASLRMDFVYKAAEREEALFFVFNRGEKDGFLLVAADDRFPEVIGYAFKGHFDAARMPDNLRGWLKGYEREMLAVMDGKAEPIDPIREAKPTRDLPSSIAPILETGEHASDPILWDQGYPFNTLHPLLPSGQQAYTGCVATAMGQIMRHYKWPEKASGEYDYYDDMTGTHTHYSGTFGETYNWSKMPGNISVGISPEEVKALSTFMRDVSFSVNMQFADFGSGTFSIFVERALRETFHYKKSLRYIHRSLLPGKEWKDMIRKELAENRPVYYAGADGSMGHAFVCDGYEPDGTFHFNWGWGGMSNGNFYLNLLNPGSLGTGAGDGGYSTDQEVVIGIEPASNEAPGIVPDPTITLYGLQHNMSDEALDLSVKIKNYSTYAGDVKLAYRLTLPNGTETTNPAVTVPIVWEDIIGESTGNITIPCSQFAEGKNTISILYRTDGMADWKELKHILMGLVNKIEVTMPAGDVAYSVADARIVLKDGSLSHNLKAYSDCKLSATVYNPGTEEFRSRVTFALRNTEGRLYFLGRHLVELHPGDEDGEKVSLTITGLKARAGQYMLVCTGDMELLMEDASWIELASIEVAEHTSTHSSLLVASNPQIDLLTVHRANPETLPTFSITNEGGATFSGKIEIVAIKAFSETFFQAKEEHMSLAQGETKVLSPELTANSSLYTNAELFPDGIYYIVIREQGFWDPIDLFGDYYYRIRLITDLSSSXIAGKDVSTIVLYPNPAHDYVHVAIPPTYAGSTLRLFDIQGRMQLSTKIRICRYASRRRTSSEGHLYRCGRRHGREALYSLIQSVNSKTDKGNAGWEIPSGHCPCTVC</sequence>
<gene>
    <name type="primary">prtT</name>
</gene>
<protein>
    <recommendedName>
        <fullName>Thiol protease/hemagglutinin PrtT</fullName>
        <ecNumber>3.4.22.-</ecNumber>
    </recommendedName>
</protein>
<proteinExistence type="inferred from homology"/>
<keyword id="KW-0348">Hemagglutinin</keyword>
<keyword id="KW-0378">Hydrolase</keyword>
<keyword id="KW-0645">Protease</keyword>
<keyword id="KW-0732">Signal</keyword>
<keyword id="KW-0788">Thiol protease</keyword>
<feature type="signal peptide" evidence="2">
    <location>
        <begin position="1"/>
        <end position="27"/>
    </location>
</feature>
<feature type="propeptide" id="PRO_0000028501" evidence="2">
    <location>
        <begin position="28"/>
        <end status="unknown"/>
    </location>
</feature>
<feature type="chain" id="PRO_0000028502" description="Thiol protease/hemagglutinin PrtT">
    <location>
        <begin status="unknown"/>
        <end position="868"/>
    </location>
</feature>
<feature type="active site" evidence="1">
    <location>
        <position position="184"/>
    </location>
</feature>
<feature type="active site" evidence="1">
    <location>
        <position position="327"/>
    </location>
</feature>
<reference key="1">
    <citation type="journal article" date="1993" name="Infect. Immun.">
        <title>Isolation and characterization of the Porphyromonas gingivalis prtT gene, coding for protease activity.</title>
        <authorList>
            <person name="Otogoto J."/>
            <person name="Kuramitsu H.K."/>
        </authorList>
    </citation>
    <scope>NUCLEOTIDE SEQUENCE [GENOMIC DNA]</scope>
    <source>
        <strain>ATCC 53977</strain>
    </source>
</reference>
<reference key="2">
    <citation type="journal article" date="1995" name="Infect. Immun.">
        <title>Revised sequence of the Porphyromonas gingivalis prtT cysteine protease/hemagglutinin gene: homology with streptococcal pyrogenic exotoxin B/streptococcal proteinase.</title>
        <authorList>
            <person name="Madden T.E."/>
            <person name="Clark V.L."/>
            <person name="Kuramitsu H.K."/>
        </authorList>
    </citation>
    <scope>NUCLEOTIDE SEQUENCE [GENOMIC DNA]</scope>
    <scope>SEQUENCE REVISION</scope>
    <source>
        <strain>ATCC 53977</strain>
    </source>
</reference>
<organism>
    <name type="scientific">Porphyromonas gingivalis</name>
    <name type="common">Bacteroides gingivalis</name>
    <dbReference type="NCBI Taxonomy" id="837"/>
    <lineage>
        <taxon>Bacteria</taxon>
        <taxon>Pseudomonadati</taxon>
        <taxon>Bacteroidota</taxon>
        <taxon>Bacteroidia</taxon>
        <taxon>Bacteroidales</taxon>
        <taxon>Porphyromonadaceae</taxon>
        <taxon>Porphyromonas</taxon>
    </lineage>
</organism>
<evidence type="ECO:0000250" key="1"/>
<evidence type="ECO:0000255" key="2"/>
<evidence type="ECO:0000305" key="3"/>
<dbReference type="EC" id="3.4.22.-"/>
<dbReference type="EMBL" id="M83096">
    <property type="status" value="NOT_ANNOTATED_CDS"/>
    <property type="molecule type" value="Genomic_DNA"/>
</dbReference>
<dbReference type="MEROPS" id="C10.002"/>
<dbReference type="GO" id="GO:0008234">
    <property type="term" value="F:cysteine-type peptidase activity"/>
    <property type="evidence" value="ECO:0007669"/>
    <property type="project" value="UniProtKB-KW"/>
</dbReference>
<dbReference type="GO" id="GO:0006508">
    <property type="term" value="P:proteolysis"/>
    <property type="evidence" value="ECO:0007669"/>
    <property type="project" value="UniProtKB-KW"/>
</dbReference>
<dbReference type="Gene3D" id="3.90.70.50">
    <property type="entry name" value="Peptidase C10, streptopain"/>
    <property type="match status" value="2"/>
</dbReference>
<dbReference type="InterPro" id="IPR038765">
    <property type="entry name" value="Papain-like_cys_pep_sf"/>
</dbReference>
<dbReference type="InterPro" id="IPR000200">
    <property type="entry name" value="Peptidase_C10"/>
</dbReference>
<dbReference type="InterPro" id="IPR025896">
    <property type="entry name" value="Spi_Prtas-inh"/>
</dbReference>
<dbReference type="InterPro" id="IPR044934">
    <property type="entry name" value="Streptopain_sf"/>
</dbReference>
<dbReference type="Pfam" id="PF13734">
    <property type="entry name" value="Inhibitor_I69"/>
    <property type="match status" value="1"/>
</dbReference>
<dbReference type="Pfam" id="PF01640">
    <property type="entry name" value="Peptidase_C10"/>
    <property type="match status" value="1"/>
</dbReference>
<dbReference type="PRINTS" id="PR00797">
    <property type="entry name" value="STREPTOPAIN"/>
</dbReference>
<dbReference type="SUPFAM" id="SSF54001">
    <property type="entry name" value="Cysteine proteinases"/>
    <property type="match status" value="1"/>
</dbReference>
<name>PRTT_PORGN</name>
<accession>P43158</accession>
<comment type="function">
    <text>Appears to be specific for arginine-containing peptide bonds. Possesses hemagglutinin activity.</text>
</comment>
<comment type="similarity">
    <text evidence="3">Belongs to the peptidase C10 family.</text>
</comment>
<comment type="caution">
    <text evidence="3">It is uncertain whether Met-1 or Met-17 is the initiator.</text>
</comment>